<dbReference type="EC" id="5.4.99.-"/>
<dbReference type="EMBL" id="CP000123">
    <property type="protein sequence ID" value="ABC01670.1"/>
    <property type="molecule type" value="Genomic_DNA"/>
</dbReference>
<dbReference type="EMBL" id="L22432">
    <property type="protein sequence ID" value="AAA16215.1"/>
    <property type="molecule type" value="Unassigned_DNA"/>
</dbReference>
<dbReference type="PIR" id="C49683">
    <property type="entry name" value="C49683"/>
</dbReference>
<dbReference type="RefSeq" id="WP_011387558.1">
    <property type="nucleotide sequence ID" value="NC_007633.1"/>
</dbReference>
<dbReference type="SMR" id="P45614"/>
<dbReference type="GeneID" id="23778332"/>
<dbReference type="KEGG" id="mcp:MCAP_0714"/>
<dbReference type="HOGENOM" id="CLU_016902_1_0_14"/>
<dbReference type="PhylomeDB" id="P45614"/>
<dbReference type="Proteomes" id="UP000001928">
    <property type="component" value="Chromosome"/>
</dbReference>
<dbReference type="GO" id="GO:0003723">
    <property type="term" value="F:RNA binding"/>
    <property type="evidence" value="ECO:0007669"/>
    <property type="project" value="UniProtKB-KW"/>
</dbReference>
<dbReference type="GO" id="GO:0120159">
    <property type="term" value="F:rRNA pseudouridine synthase activity"/>
    <property type="evidence" value="ECO:0007669"/>
    <property type="project" value="UniProtKB-ARBA"/>
</dbReference>
<dbReference type="GO" id="GO:0000455">
    <property type="term" value="P:enzyme-directed rRNA pseudouridine synthesis"/>
    <property type="evidence" value="ECO:0007669"/>
    <property type="project" value="UniProtKB-ARBA"/>
</dbReference>
<dbReference type="CDD" id="cd02869">
    <property type="entry name" value="PseudoU_synth_RluA_like"/>
    <property type="match status" value="1"/>
</dbReference>
<dbReference type="CDD" id="cd00165">
    <property type="entry name" value="S4"/>
    <property type="match status" value="1"/>
</dbReference>
<dbReference type="Gene3D" id="3.30.2350.10">
    <property type="entry name" value="Pseudouridine synthase"/>
    <property type="match status" value="1"/>
</dbReference>
<dbReference type="Gene3D" id="3.10.290.10">
    <property type="entry name" value="RNA-binding S4 domain"/>
    <property type="match status" value="1"/>
</dbReference>
<dbReference type="InterPro" id="IPR020103">
    <property type="entry name" value="PsdUridine_synth_cat_dom_sf"/>
</dbReference>
<dbReference type="InterPro" id="IPR006145">
    <property type="entry name" value="PsdUridine_synth_RsuA/RluA"/>
</dbReference>
<dbReference type="InterPro" id="IPR050188">
    <property type="entry name" value="RluA_PseudoU_synthase"/>
</dbReference>
<dbReference type="InterPro" id="IPR002942">
    <property type="entry name" value="S4_RNA-bd"/>
</dbReference>
<dbReference type="InterPro" id="IPR036986">
    <property type="entry name" value="S4_RNA-bd_sf"/>
</dbReference>
<dbReference type="PANTHER" id="PTHR21600">
    <property type="entry name" value="MITOCHONDRIAL RNA PSEUDOURIDINE SYNTHASE"/>
    <property type="match status" value="1"/>
</dbReference>
<dbReference type="PANTHER" id="PTHR21600:SF83">
    <property type="entry name" value="PSEUDOURIDYLATE SYNTHASE RPUSD4, MITOCHONDRIAL"/>
    <property type="match status" value="1"/>
</dbReference>
<dbReference type="Pfam" id="PF00849">
    <property type="entry name" value="PseudoU_synth_2"/>
    <property type="match status" value="1"/>
</dbReference>
<dbReference type="Pfam" id="PF01479">
    <property type="entry name" value="S4"/>
    <property type="match status" value="1"/>
</dbReference>
<dbReference type="SMART" id="SM00363">
    <property type="entry name" value="S4"/>
    <property type="match status" value="1"/>
</dbReference>
<dbReference type="SUPFAM" id="SSF55174">
    <property type="entry name" value="Alpha-L RNA-binding motif"/>
    <property type="match status" value="1"/>
</dbReference>
<dbReference type="SUPFAM" id="SSF55120">
    <property type="entry name" value="Pseudouridine synthase"/>
    <property type="match status" value="1"/>
</dbReference>
<dbReference type="PROSITE" id="PS50889">
    <property type="entry name" value="S4"/>
    <property type="match status" value="1"/>
</dbReference>
<proteinExistence type="inferred from homology"/>
<keyword id="KW-0413">Isomerase</keyword>
<keyword id="KW-0694">RNA-binding</keyword>
<reference key="1">
    <citation type="submission" date="2005-09" db="EMBL/GenBank/DDBJ databases">
        <authorList>
            <person name="Glass J.I."/>
            <person name="Lartigue C."/>
            <person name="Pfannkoch C."/>
            <person name="Baden-Tillson H."/>
            <person name="Smith H.O."/>
            <person name="Venter J.C."/>
            <person name="Roske K."/>
            <person name="Wise K.S."/>
            <person name="Calcutt M.J."/>
            <person name="Nelson W.C."/>
            <person name="Nierman W.C."/>
        </authorList>
    </citation>
    <scope>NUCLEOTIDE SEQUENCE [LARGE SCALE GENOMIC DNA]</scope>
    <source>
        <strain>California kid / ATCC 27343 / NCTC 10154</strain>
    </source>
</reference>
<reference key="2">
    <citation type="journal article" date="1993" name="J. Biol. Chem.">
        <title>Unique monocistronic operon (ptsH) in Mycoplasma capricolum encoding the phosphocarrier protein, HPr, of the phosphoenolpyruvate:sugar phosphotransferase system. Cloning, sequencing, and characterization of ptsH.</title>
        <authorList>
            <person name="Zhu P.-P."/>
            <person name="Reizer J."/>
            <person name="Reizer A."/>
            <person name="Peterkofsky A."/>
        </authorList>
    </citation>
    <scope>NUCLEOTIDE SEQUENCE [GENOMIC DNA] OF 1-145</scope>
</reference>
<accession>P45614</accession>
<accession>Q2SRD9</accession>
<organism>
    <name type="scientific">Mycoplasma capricolum subsp. capricolum (strain California kid / ATCC 27343 / NCTC 10154)</name>
    <dbReference type="NCBI Taxonomy" id="340047"/>
    <lineage>
        <taxon>Bacteria</taxon>
        <taxon>Bacillati</taxon>
        <taxon>Mycoplasmatota</taxon>
        <taxon>Mollicutes</taxon>
        <taxon>Mycoplasmataceae</taxon>
        <taxon>Mycoplasma</taxon>
    </lineage>
</organism>
<evidence type="ECO:0000250" key="1"/>
<evidence type="ECO:0000255" key="2">
    <source>
        <dbReference type="PROSITE-ProRule" id="PRU00182"/>
    </source>
</evidence>
<evidence type="ECO:0000305" key="3"/>
<protein>
    <recommendedName>
        <fullName>Uncharacterized RNA pseudouridine synthase MCAP_0714</fullName>
        <ecNumber>5.4.99.-</ecNumber>
    </recommendedName>
    <alternativeName>
        <fullName>ORF2</fullName>
    </alternativeName>
    <alternativeName>
        <fullName>RNA pseudouridylate synthase</fullName>
    </alternativeName>
    <alternativeName>
        <fullName>RNA-uridine isomerase</fullName>
    </alternativeName>
</protein>
<name>Y714_MYCCT</name>
<sequence>MTKFIVNKNDQNQTLFKFLKKTFKTTPISVIYKWIRNKSIKINSKRVNDKNYLLKINDVVEVYDSNKPIIRDQFNYISNVNLDIVYEDNNILIVNKPNNLEMHSIYNLCLDDMVKSYLVDKKEYDIYLENSFVISHVHRLDKLTSGLVIYAKNKISSIILTNAFKTKDQINKYYYALTSYDWNLNDFLQVNGYINYNSNTQKADFSLVEKNNYKYCQTEFKLVNKNLILVKLITGKKHQIRSVLSFYNNPILNDFRYNGKKENDQKMIYLAAFKIEFKSLKKPLDYLNNKVIIKNPDWISRR</sequence>
<feature type="chain" id="PRO_0000162745" description="Uncharacterized RNA pseudouridine synthase MCAP_0714">
    <location>
        <begin position="1"/>
        <end position="302"/>
    </location>
</feature>
<feature type="domain" description="S4 RNA-binding" evidence="2">
    <location>
        <begin position="13"/>
        <end position="89"/>
    </location>
</feature>
<feature type="active site" evidence="1">
    <location>
        <position position="141"/>
    </location>
</feature>
<comment type="catalytic activity">
    <reaction>
        <text>a uridine in RNA = a pseudouridine in RNA</text>
        <dbReference type="Rhea" id="RHEA:48348"/>
        <dbReference type="Rhea" id="RHEA-COMP:12068"/>
        <dbReference type="Rhea" id="RHEA-COMP:12069"/>
        <dbReference type="ChEBI" id="CHEBI:65314"/>
        <dbReference type="ChEBI" id="CHEBI:65315"/>
    </reaction>
</comment>
<comment type="similarity">
    <text evidence="3">Belongs to the pseudouridine synthase RluA family.</text>
</comment>
<gene>
    <name type="ordered locus">MCAP_0714</name>
</gene>